<accession>Q26250</accession>
<dbReference type="EMBL" id="S40059">
    <property type="protein sequence ID" value="AAB22508.1"/>
    <property type="molecule type" value="mRNA"/>
</dbReference>
<dbReference type="PIR" id="S32544">
    <property type="entry name" value="S32544"/>
</dbReference>
<dbReference type="SMR" id="Q26250"/>
<dbReference type="GO" id="GO:0033179">
    <property type="term" value="C:proton-transporting V-type ATPase, V0 domain"/>
    <property type="evidence" value="ECO:0007669"/>
    <property type="project" value="InterPro"/>
</dbReference>
<dbReference type="GO" id="GO:0005774">
    <property type="term" value="C:vacuolar membrane"/>
    <property type="evidence" value="ECO:0007669"/>
    <property type="project" value="UniProtKB-SubCell"/>
</dbReference>
<dbReference type="GO" id="GO:0046961">
    <property type="term" value="F:proton-transporting ATPase activity, rotational mechanism"/>
    <property type="evidence" value="ECO:0007669"/>
    <property type="project" value="InterPro"/>
</dbReference>
<dbReference type="CDD" id="cd18175">
    <property type="entry name" value="ATP-synt_Vo_c_ATP6C_rpt1"/>
    <property type="match status" value="1"/>
</dbReference>
<dbReference type="CDD" id="cd18176">
    <property type="entry name" value="ATP-synt_Vo_c_ATP6C_rpt2"/>
    <property type="match status" value="1"/>
</dbReference>
<dbReference type="FunFam" id="1.20.120.610:FF:000001">
    <property type="entry name" value="V-type proton ATPase proteolipid subunit"/>
    <property type="match status" value="1"/>
</dbReference>
<dbReference type="Gene3D" id="1.20.120.610">
    <property type="entry name" value="lithium bound rotor ring of v- atpase"/>
    <property type="match status" value="1"/>
</dbReference>
<dbReference type="InterPro" id="IPR002379">
    <property type="entry name" value="ATPase_proteolipid_c-like_dom"/>
</dbReference>
<dbReference type="InterPro" id="IPR000245">
    <property type="entry name" value="ATPase_proteolipid_csu"/>
</dbReference>
<dbReference type="InterPro" id="IPR011555">
    <property type="entry name" value="ATPase_proteolipid_su_C_euk"/>
</dbReference>
<dbReference type="InterPro" id="IPR035921">
    <property type="entry name" value="F/V-ATP_Csub_sf"/>
</dbReference>
<dbReference type="NCBIfam" id="TIGR01100">
    <property type="entry name" value="V_ATP_synt_C"/>
    <property type="match status" value="1"/>
</dbReference>
<dbReference type="PANTHER" id="PTHR10263">
    <property type="entry name" value="V-TYPE PROTON ATPASE PROTEOLIPID SUBUNIT"/>
    <property type="match status" value="1"/>
</dbReference>
<dbReference type="Pfam" id="PF00137">
    <property type="entry name" value="ATP-synt_C"/>
    <property type="match status" value="2"/>
</dbReference>
<dbReference type="PRINTS" id="PR00122">
    <property type="entry name" value="VACATPASE"/>
</dbReference>
<dbReference type="SUPFAM" id="SSF81333">
    <property type="entry name" value="F1F0 ATP synthase subunit C"/>
    <property type="match status" value="2"/>
</dbReference>
<proteinExistence type="evidence at transcript level"/>
<protein>
    <recommendedName>
        <fullName evidence="5">V-type proton ATPase 16 kDa proteolipid subunit c</fullName>
        <shortName evidence="5">V-ATPase 16 kDa proteolipid subunit c</shortName>
    </recommendedName>
    <alternativeName>
        <fullName evidence="5">Vacuolar proton pump 16 kDa proteolipid subunit c</fullName>
    </alternativeName>
</protein>
<feature type="chain" id="PRO_0000071756" description="V-type proton ATPase 16 kDa proteolipid subunit c">
    <location>
        <begin position="1"/>
        <end position="159"/>
    </location>
</feature>
<feature type="topological domain" description="Lumenal" evidence="3">
    <location>
        <begin position="1"/>
        <end position="11"/>
    </location>
</feature>
<feature type="transmembrane region" description="Helical" evidence="3">
    <location>
        <begin position="12"/>
        <end position="32"/>
    </location>
</feature>
<feature type="topological domain" description="Cytoplasmic" evidence="3">
    <location>
        <begin position="33"/>
        <end position="54"/>
    </location>
</feature>
<feature type="transmembrane region" description="Helical" evidence="3">
    <location>
        <begin position="55"/>
        <end position="75"/>
    </location>
</feature>
<feature type="topological domain" description="Lumenal" evidence="3">
    <location>
        <begin position="76"/>
        <end position="93"/>
    </location>
</feature>
<feature type="transmembrane region" description="Helical" evidence="3">
    <location>
        <begin position="94"/>
        <end position="114"/>
    </location>
</feature>
<feature type="topological domain" description="Cytoplasmic" evidence="3">
    <location>
        <begin position="115"/>
        <end position="132"/>
    </location>
</feature>
<feature type="transmembrane region" description="Helical" evidence="3">
    <location>
        <begin position="133"/>
        <end position="153"/>
    </location>
</feature>
<feature type="topological domain" description="Lumenal" evidence="3">
    <location>
        <begin position="154"/>
        <end position="159"/>
    </location>
</feature>
<feature type="site" description="Essential for proton translocation" evidence="2">
    <location>
        <position position="140"/>
    </location>
</feature>
<organism>
    <name type="scientific">Nephrops norvegicus</name>
    <name type="common">Norway lobster</name>
    <dbReference type="NCBI Taxonomy" id="6829"/>
    <lineage>
        <taxon>Eukaryota</taxon>
        <taxon>Metazoa</taxon>
        <taxon>Ecdysozoa</taxon>
        <taxon>Arthropoda</taxon>
        <taxon>Crustacea</taxon>
        <taxon>Multicrustacea</taxon>
        <taxon>Malacostraca</taxon>
        <taxon>Eumalacostraca</taxon>
        <taxon>Eucarida</taxon>
        <taxon>Decapoda</taxon>
        <taxon>Pleocyemata</taxon>
        <taxon>Astacidea</taxon>
        <taxon>Nephropoidea</taxon>
        <taxon>Nephropidae</taxon>
        <taxon>Nephrops</taxon>
    </lineage>
</organism>
<name>VATL_NEPNO</name>
<reference key="1">
    <citation type="journal article" date="1992" name="Protein Eng.">
        <title>Structure of a 16 kDa integral membrane protein that has identity to the putative proton channel of the vacuolar H(+)-ATPase.</title>
        <authorList>
            <person name="Finbow M.E."/>
            <person name="Eliopoulos E.E."/>
            <person name="Jackson P.J."/>
            <person name="Keen J.N."/>
            <person name="Meagher L."/>
            <person name="Thompson P."/>
            <person name="Jones P."/>
            <person name="Findlay J.B."/>
        </authorList>
    </citation>
    <scope>NUCLEOTIDE SEQUENCE [MRNA]</scope>
</reference>
<reference key="2">
    <citation type="journal article" date="1994" name="Eur. J. Biochem.">
        <title>Functional properties of a hybrid vacuolar H(+)-ATPase in Saccharomyces cells expressing the Nephrops 16-kDa proteolipid.</title>
        <authorList>
            <person name="Harrison M.A."/>
            <person name="Jones P.C."/>
            <person name="Kim Y.I."/>
            <person name="Finbow M.E."/>
            <person name="Findlay J.B."/>
        </authorList>
    </citation>
    <scope>NUCLEOTIDE SEQUENCE [MRNA] OF 153-159</scope>
    <scope>FUNCTION</scope>
</reference>
<evidence type="ECO:0000250" key="1">
    <source>
        <dbReference type="UniProtKB" id="P27449"/>
    </source>
</evidence>
<evidence type="ECO:0000250" key="2">
    <source>
        <dbReference type="UniProtKB" id="P63081"/>
    </source>
</evidence>
<evidence type="ECO:0000255" key="3"/>
<evidence type="ECO:0000269" key="4">
    <source>
    </source>
</evidence>
<evidence type="ECO:0000305" key="5"/>
<comment type="function">
    <text evidence="4">Proton-conducting pore forming subunit of the V0 complex of vacuolar(H+)-ATPase (V-ATPase), a multisubunit enzyme composed of a peripheral complex (V1) that hydrolyzes ATP and a membrane integral complex (V0) that translocates protons (PubMed:8168500). V-ATPase is responsible for acidifying and maintaining the pH of intracellular compartments and in some cell types, is targeted to the plasma membrane, where it is responsible for acidifying the extracellular environment (PubMed:8168500).</text>
</comment>
<comment type="subunit">
    <text evidence="1">V-ATPase is a heteromultimeric enzyme made up of two complexes: the ATP-hydrolytic V1 complex and the proton translocation V0 complex (By similarity). The V1 complex consists of three catalytic AB heterodimers that form a heterohexamer, three peripheral stalks each consisting of EG heterodimers, one central rotor including subunits D and F, and the regulatory subunits C and H (By similarity). The proton translocation complex V0 consists of the proton transport subunit a, a ring of proteolipid subunits c9c'', rotary subunit d, subunits e and f, and two accessory subunits (By similarity).</text>
</comment>
<comment type="subcellular location">
    <subcellularLocation>
        <location>Vacuole membrane</location>
        <topology>Multi-pass membrane protein</topology>
    </subcellularLocation>
</comment>
<comment type="similarity">
    <text evidence="5">Belongs to the V-ATPase proteolipid subunit family.</text>
</comment>
<sequence length="159" mass="16280">MSEEGSPMYSPFFGVMGAASAMVFSALGAAYGTAKSGVGISAMSVMRPELIMKCIIPVVMAGIIAIYGLVVAVLIAGKLDEAPTYTLYQGFVHMGAGLSVGLSGLAAGFAIGIVGDAGVRGTAQQPRLYVGMILILIFAEVLGLYGLIVAIFLYTKTSS</sequence>
<keyword id="KW-0375">Hydrogen ion transport</keyword>
<keyword id="KW-0406">Ion transport</keyword>
<keyword id="KW-0472">Membrane</keyword>
<keyword id="KW-0812">Transmembrane</keyword>
<keyword id="KW-1133">Transmembrane helix</keyword>
<keyword id="KW-0813">Transport</keyword>
<keyword id="KW-0926">Vacuole</keyword>